<organism>
    <name type="scientific">Candida albicans (strain SC5314 / ATCC MYA-2876)</name>
    <name type="common">Yeast</name>
    <dbReference type="NCBI Taxonomy" id="237561"/>
    <lineage>
        <taxon>Eukaryota</taxon>
        <taxon>Fungi</taxon>
        <taxon>Dikarya</taxon>
        <taxon>Ascomycota</taxon>
        <taxon>Saccharomycotina</taxon>
        <taxon>Pichiomycetes</taxon>
        <taxon>Debaryomycetaceae</taxon>
        <taxon>Candida/Lodderomyces clade</taxon>
        <taxon>Candida</taxon>
    </lineage>
</organism>
<protein>
    <recommendedName>
        <fullName>Cell wall protein 1</fullName>
    </recommendedName>
    <alternativeName>
        <fullName>Surface antigen protein 1</fullName>
    </alternativeName>
    <alternativeName>
        <fullName>Wall protein 1</fullName>
    </alternativeName>
</protein>
<comment type="function">
    <text evidence="9 12 14">Heme-binding protein involved in heme-iron utilization. The ability to acquire iron from host tissues is a major virulence factor of pathogenic microorganisms. Required for biofilm formation.</text>
</comment>
<comment type="subcellular location">
    <subcellularLocation>
        <location evidence="5 13 17 19">Secreted</location>
        <location evidence="5 13 17 19">Cell wall</location>
    </subcellularLocation>
    <subcellularLocation>
        <location evidence="21">Membrane</location>
        <topology evidence="21">Lipid-anchor</topology>
        <topology evidence="21">GPI-anchor</topology>
    </subcellularLocation>
</comment>
<comment type="induction">
    <text evidence="5 6 7 8 10 11 14 15 16 17 18 19">Preferentially expressed during the mycelial growth phase with only low levels of transcript detected in the yeast form. Induced by iron starvation and ciclopirox. Positively regulated by BCR1 and RIM101, and repressed by TUP1. Expression is also regulated by EFG1, CPH1, HAP43, and SEF1.</text>
</comment>
<comment type="domain">
    <text evidence="1 12">The CFEM domain is involved in heme-binding. It contains 8 cysteines and is found in proteins from several pathogenic fungi, including both human and plant pathogens.</text>
</comment>
<comment type="PTM">
    <text evidence="21">The GPI-anchor is attached to the protein in the endoplasmic reticulum and serves to target the protein to the cell surface. There, the glucosamine-inositol phospholipid moiety is cleaved off and the GPI-modified mannoprotein is covalently attached via its lipidless GPI glycan remnant to the 1,6-beta-glucan of the outer cell wall layer.</text>
</comment>
<comment type="similarity">
    <text evidence="21">Belongs to the RBT5 family.</text>
</comment>
<reference key="1">
    <citation type="journal article" date="2004" name="Proc. Natl. Acad. Sci. U.S.A.">
        <title>The diploid genome sequence of Candida albicans.</title>
        <authorList>
            <person name="Jones T."/>
            <person name="Federspiel N.A."/>
            <person name="Chibana H."/>
            <person name="Dungan J."/>
            <person name="Kalman S."/>
            <person name="Magee B.B."/>
            <person name="Newport G."/>
            <person name="Thorstenson Y.R."/>
            <person name="Agabian N."/>
            <person name="Magee P.T."/>
            <person name="Davis R.W."/>
            <person name="Scherer S."/>
        </authorList>
    </citation>
    <scope>NUCLEOTIDE SEQUENCE [LARGE SCALE GENOMIC DNA]</scope>
    <source>
        <strain>SC5314 / ATCC MYA-2876</strain>
    </source>
</reference>
<reference key="2">
    <citation type="journal article" date="2007" name="Genome Biol.">
        <title>Assembly of the Candida albicans genome into sixteen supercontigs aligned on the eight chromosomes.</title>
        <authorList>
            <person name="van het Hoog M."/>
            <person name="Rast T.J."/>
            <person name="Martchenko M."/>
            <person name="Grindle S."/>
            <person name="Dignard D."/>
            <person name="Hogues H."/>
            <person name="Cuomo C."/>
            <person name="Berriman M."/>
            <person name="Scherer S."/>
            <person name="Magee B.B."/>
            <person name="Whiteway M."/>
            <person name="Chibana H."/>
            <person name="Nantel A."/>
            <person name="Magee P.T."/>
        </authorList>
    </citation>
    <scope>GENOME REANNOTATION</scope>
    <source>
        <strain>SC5314 / ATCC MYA-2876</strain>
    </source>
</reference>
<reference key="3">
    <citation type="journal article" date="2013" name="Genome Biol.">
        <title>Assembly of a phased diploid Candida albicans genome facilitates allele-specific measurements and provides a simple model for repeat and indel structure.</title>
        <authorList>
            <person name="Muzzey D."/>
            <person name="Schwartz K."/>
            <person name="Weissman J.S."/>
            <person name="Sherlock G."/>
        </authorList>
    </citation>
    <scope>NUCLEOTIDE SEQUENCE [LARGE SCALE GENOMIC DNA]</scope>
    <scope>GENOME REANNOTATION</scope>
    <source>
        <strain>SC5314 / ATCC MYA-2876</strain>
    </source>
</reference>
<reference key="4">
    <citation type="journal article" date="2000" name="Genetics">
        <title>TUP1, CPH1 and EFG1 make independent contributions to filamentation in Candida albicans.</title>
        <authorList>
            <person name="Braun B.R."/>
            <person name="Johnson A.D."/>
        </authorList>
    </citation>
    <scope>INDUCTION</scope>
</reference>
<reference key="5">
    <citation type="journal article" date="2000" name="Genetics">
        <title>Identification and characterization of TUP1-regulated genes in Candida albicans.</title>
        <authorList>
            <person name="Braun B.R."/>
            <person name="Head W.S."/>
            <person name="Wang M.X."/>
            <person name="Johnson A.D."/>
        </authorList>
    </citation>
    <scope>IDENTIFICATION IN THE RBT5 FAMILY</scope>
    <scope>INDUCTION</scope>
</reference>
<reference key="6">
    <citation type="journal article" date="2000" name="Mol. Microbiol.">
        <title>Expression cloning of the Candida albicans CSA1 gene encoding a mycelial surface antigen by sorting of Saccharomyces cerevisiae transformants with monoclonal antibody-coated magnetic beads.</title>
        <authorList>
            <person name="Lamarre C."/>
            <person name="Deslauriers N."/>
            <person name="Bourbonnais Y."/>
        </authorList>
    </citation>
    <scope>SUBCELLULAR LOCATION</scope>
    <scope>INDUCTION</scope>
</reference>
<reference key="7">
    <citation type="journal article" date="2002" name="Eukaryot. Cell">
        <title>A forkhead transcription factor is important for true hyphal as well as yeast morphogenesis in Candida albicans.</title>
        <authorList>
            <person name="Bensen E.S."/>
            <person name="Filler S.G."/>
            <person name="Berman J."/>
        </authorList>
    </citation>
    <scope>INDUCTION</scope>
</reference>
<reference key="8">
    <citation type="journal article" date="2003" name="Yeast">
        <title>Genome-wide identification of fungal GPI proteins.</title>
        <authorList>
            <person name="De Groot P.W."/>
            <person name="Hellingwerf K.J."/>
            <person name="Klis F.M."/>
        </authorList>
    </citation>
    <scope>PREDICTION OF GPI-ANCHOR</scope>
</reference>
<reference key="9">
    <citation type="journal article" date="2004" name="Mol. Microbiol.">
        <title>A family of Candida cell surface haem-binding proteins involved in haemin and haemoglobin-iron utilization.</title>
        <authorList>
            <person name="Weissman Z."/>
            <person name="Kornitzer D."/>
        </authorList>
    </citation>
    <scope>HEME-BINDING</scope>
    <scope>FUNCTION</scope>
</reference>
<reference key="10">
    <citation type="journal article" date="2004" name="Mol. Microbiol.">
        <title>Transcriptional profiling in Candida albicans reveals new adaptive responses to extracellular pH and functions for Rim101p.</title>
        <authorList>
            <person name="Bensen E.S."/>
            <person name="Martin S.J."/>
            <person name="Li M."/>
            <person name="Berman J."/>
            <person name="Davis D.A."/>
        </authorList>
    </citation>
    <scope>INDUCTION</scope>
</reference>
<reference key="11">
    <citation type="journal article" date="2005" name="J. Antimicrob. Chemother.">
        <title>Oxygen accessibility and iron levels are critical factors for the antifungal action of ciclopirox against Candida albicans.</title>
        <authorList>
            <person name="Sigle H.C."/>
            <person name="Thewes S."/>
            <person name="Niewerth M."/>
            <person name="Korting H.C."/>
            <person name="Schafer-Korting M."/>
            <person name="Hube B."/>
        </authorList>
    </citation>
    <scope>INDUCTION</scope>
</reference>
<reference key="12">
    <citation type="journal article" date="2006" name="FEMS Yeast Res.">
        <title>Biofilm formation by Candida albicans mutants for genes coding fungal proteins exhibiting the eight-cysteine-containing CFEM domain.</title>
        <authorList>
            <person name="Perez A."/>
            <person name="Pedros B."/>
            <person name="Murgui A."/>
            <person name="Casanova M."/>
            <person name="Lopez-Ribot J.L."/>
            <person name="Martinez J.P."/>
        </authorList>
    </citation>
    <scope>FUNCTION</scope>
    <scope>DOMAIN</scope>
</reference>
<reference key="13">
    <citation type="journal article" date="2009" name="Fungal Genet. Biol.">
        <title>Trifluoromethanesulfonic acid-based proteomic analysis of cell wall and secreted proteins of the ascomycetous fungi Neurospora crassa and Candida albicans.</title>
        <authorList>
            <person name="Maddi A."/>
            <person name="Bowman S.M."/>
            <person name="Free S.J."/>
        </authorList>
    </citation>
    <scope>IDENTIFICATION BY MASS SPECTROMETRY</scope>
    <scope>SUBCELLULAR LOCATION</scope>
</reference>
<reference key="14">
    <citation type="journal article" date="2011" name="Cell Host Microbe">
        <title>An iron homeostasis regulatory circuit with reciprocal roles in Candida albicans commensalism and pathogenesis.</title>
        <authorList>
            <person name="Chen C."/>
            <person name="Pande K."/>
            <person name="French S.D."/>
            <person name="Tuch B.B."/>
            <person name="Noble S.M."/>
        </authorList>
    </citation>
    <scope>INDUCTION</scope>
</reference>
<reference key="15">
    <citation type="journal article" date="2011" name="FEMS Yeast Res.">
        <title>Some biological features of Candida albicans mutants for genes coding fungal proteins containing the CFEM domain.</title>
        <authorList>
            <person name="Perez A."/>
            <person name="Ramage G."/>
            <person name="Blanes R."/>
            <person name="Murgui A."/>
            <person name="Casanova M."/>
            <person name="Martinez J.P."/>
        </authorList>
    </citation>
    <scope>INDUCTION</scope>
    <scope>FUNCTION</scope>
</reference>
<reference key="16">
    <citation type="journal article" date="2011" name="PLoS ONE">
        <title>Conserved and divergent roles of Bcr1 and CFEM proteins in Candida parapsilosis and Candida albicans.</title>
        <authorList>
            <person name="Ding C."/>
            <person name="Vidanes G.M."/>
            <person name="Maguire S.L."/>
            <person name="Guida A."/>
            <person name="Synnott J.M."/>
            <person name="Andes D.R."/>
            <person name="Butler G."/>
        </authorList>
    </citation>
    <scope>INDUCTION</scope>
</reference>
<reference key="17">
    <citation type="journal article" date="2013" name="Eukaryot. Cell">
        <title>Surface stress induces a conserved cell wall stress response in the pathogenic fungus Candida albicans.</title>
        <authorList>
            <person name="Heilmann C.J."/>
            <person name="Sorgo A.G."/>
            <person name="Mohammadi S."/>
            <person name="Sosinska G.J."/>
            <person name="de Koster C.G."/>
            <person name="Brul S."/>
            <person name="de Koning L.J."/>
            <person name="Klis F.M."/>
        </authorList>
    </citation>
    <scope>IDENTIFICATION BY MASS SPECTROMETRY</scope>
    <scope>SUBCELLULAR LOCATION</scope>
    <scope>INDUCTION</scope>
</reference>
<reference key="18">
    <citation type="journal article" date="2013" name="Eukaryot. Cell">
        <title>Identification of genes upregulated by the transcription factor Bcr1 that are involved in impermeability, impenetrability, and drug resistance of Candida albicans a/alpha biofilms.</title>
        <authorList>
            <person name="Srikantha T."/>
            <person name="Daniels K.J."/>
            <person name="Pujol C."/>
            <person name="Kim E."/>
            <person name="Soll D.R."/>
        </authorList>
    </citation>
    <scope>INDUCTION</scope>
</reference>
<reference key="19">
    <citation type="journal article" date="2013" name="Microbiology">
        <title>Iron restriction-induced adaptations in the wall proteome of Candida albicans.</title>
        <authorList>
            <person name="Sorgo A.G."/>
            <person name="Brul S."/>
            <person name="de Koster C.G."/>
            <person name="de Koning L.J."/>
            <person name="Klis F.M."/>
        </authorList>
    </citation>
    <scope>IDENTIFICATION BY MASS SPECTROMETRY</scope>
    <scope>SUBCELLULAR LOCATION</scope>
    <scope>INDUCTION</scope>
</reference>
<sequence>MLPSIVISIVLASFVSAESSITEAPTTTAEDNPYTIYPSVAKTASINGFADRIYDQLPECAKPCMFQNTGVTPCPYWDTGCLCIMPTFAGAIGSCIAEKCKGQDVVSATSLGTSICSVAGVWDPYWMVPANVQSSLSAAATAVASSSEQPVETSSEPAGSSQSVESSQPAETSSSEPAETSSSEPAETSSETSSEQPASSEPAETSSEESSTITSAPSTPEDNPYTIYPSVAKTASINGFADRIYDQLPECAKPCMFQNTGVTPCPYWDTGCLCIMPTFAGAIGSCIAEKCKGQDVVSATSLGTSICSVAGVWDPYWMVPANVQSSLSAAATAVPSSSEQSVETSSESAESSQSVESSQPAETSSEQPSETSSETSSQQLSSITSAPDSSATSSSSTTSTFIRTASINGFADKLYDQLPECAKPCMFQNTGITPCPYWDAGCLCVMPQFAGAIGSCVADSCKGQDIVSVTSLGTSVCSVAGVNAPYWMLPASVKSSLSVAATAVPTSDSASETASQEPSETSSEQPSETASQQPAETSSEESSTITSAPSTPEDNPYTIYPSVAKTASINGFADRIYDQLPECAKPCMFQNTGVTPCPYWDTGCLCIMPTFAGAIGSCIAEKCKGQDVVSATSLGSSICSVAGVWDPYWMLPANVQSSLNAAATAVATSDSASEVASASESASQVPQETSAASSQSANNSVASAAPSNSSVSAAPSSNSSGVPAAPSNNSSGASVVPSQSANNSSASAAPSNNSSSAISESVAPSSYGNSTIAQPSTSTKSDAASITGPITTDKVITNESGIVFTSTVIITHVSEYCDQTSAAAVQSSACEEQSSAKSEQASASSEQVKVITSVVWCESSIQSIESVKTSAEAAHKTEVIASCASELSSLSSAKSEAMKTVSSLVEVQKSAVAKQTSLAAVQSSAASVQLSAAHAQKSSEAVEVAQTAVAEASKAGDEISTEIVNITKTVSSGKETGVSQATVAANTHSVAIANMANTKFASTMSLLVASFVFVGLFI</sequence>
<gene>
    <name type="primary">CSA1</name>
    <name type="synonym">WAP1</name>
    <name type="ordered locus">CAALFM_C700090CA</name>
    <name type="ORF">CaO19.7114</name>
</gene>
<keyword id="KW-0134">Cell wall</keyword>
<keyword id="KW-1015">Disulfide bond</keyword>
<keyword id="KW-0325">Glycoprotein</keyword>
<keyword id="KW-0336">GPI-anchor</keyword>
<keyword id="KW-0349">Heme</keyword>
<keyword id="KW-0408">Iron</keyword>
<keyword id="KW-0449">Lipoprotein</keyword>
<keyword id="KW-0472">Membrane</keyword>
<keyword id="KW-0479">Metal-binding</keyword>
<keyword id="KW-1185">Reference proteome</keyword>
<keyword id="KW-0677">Repeat</keyword>
<keyword id="KW-0964">Secreted</keyword>
<keyword id="KW-0732">Signal</keyword>
<keyword id="KW-0843">Virulence</keyword>
<accession>G1UB63</accession>
<accession>A0A1D8PQH2</accession>
<proteinExistence type="evidence at protein level"/>
<evidence type="ECO:0000250" key="1">
    <source>
        <dbReference type="UniProtKB" id="Q59UT5"/>
    </source>
</evidence>
<evidence type="ECO:0000255" key="2"/>
<evidence type="ECO:0000255" key="3">
    <source>
        <dbReference type="PROSITE-ProRule" id="PRU01356"/>
    </source>
</evidence>
<evidence type="ECO:0000256" key="4">
    <source>
        <dbReference type="SAM" id="MobiDB-lite"/>
    </source>
</evidence>
<evidence type="ECO:0000269" key="5">
    <source>
    </source>
</evidence>
<evidence type="ECO:0000269" key="6">
    <source>
    </source>
</evidence>
<evidence type="ECO:0000269" key="7">
    <source>
    </source>
</evidence>
<evidence type="ECO:0000269" key="8">
    <source>
    </source>
</evidence>
<evidence type="ECO:0000269" key="9">
    <source>
    </source>
</evidence>
<evidence type="ECO:0000269" key="10">
    <source>
    </source>
</evidence>
<evidence type="ECO:0000269" key="11">
    <source>
    </source>
</evidence>
<evidence type="ECO:0000269" key="12">
    <source>
    </source>
</evidence>
<evidence type="ECO:0000269" key="13">
    <source>
    </source>
</evidence>
<evidence type="ECO:0000269" key="14">
    <source>
    </source>
</evidence>
<evidence type="ECO:0000269" key="15">
    <source>
    </source>
</evidence>
<evidence type="ECO:0000269" key="16">
    <source>
    </source>
</evidence>
<evidence type="ECO:0000269" key="17">
    <source>
    </source>
</evidence>
<evidence type="ECO:0000269" key="18">
    <source>
    </source>
</evidence>
<evidence type="ECO:0000269" key="19">
    <source>
    </source>
</evidence>
<evidence type="ECO:0000303" key="20">
    <source>
    </source>
</evidence>
<evidence type="ECO:0000305" key="21"/>
<name>CSA1_CANAL</name>
<dbReference type="EMBL" id="CP017629">
    <property type="protein sequence ID" value="AOW30388.1"/>
    <property type="molecule type" value="Genomic_DNA"/>
</dbReference>
<dbReference type="RefSeq" id="XP_720404.1">
    <property type="nucleotide sequence ID" value="XM_715311.1"/>
</dbReference>
<dbReference type="SMR" id="G1UB63"/>
<dbReference type="STRING" id="237561.G1UB63"/>
<dbReference type="GlyCosmos" id="G1UB63">
    <property type="glycosylation" value="9 sites, No reported glycans"/>
</dbReference>
<dbReference type="EnsemblFungi" id="C7_00090C_A-T">
    <property type="protein sequence ID" value="C7_00090C_A-T-p1"/>
    <property type="gene ID" value="C7_00090C_A"/>
</dbReference>
<dbReference type="GeneID" id="3638009"/>
<dbReference type="KEGG" id="cal:CAALFM_C700090CA"/>
<dbReference type="CGD" id="CAL0000201940">
    <property type="gene designation" value="CSA1"/>
</dbReference>
<dbReference type="VEuPathDB" id="FungiDB:C7_00090C_A"/>
<dbReference type="eggNOG" id="ENOG502SD7M">
    <property type="taxonomic scope" value="Eukaryota"/>
</dbReference>
<dbReference type="HOGENOM" id="CLU_010164_0_0_1"/>
<dbReference type="InParanoid" id="G1UB63"/>
<dbReference type="OrthoDB" id="2496787at2759"/>
<dbReference type="Proteomes" id="UP000000559">
    <property type="component" value="Chromosome 7"/>
</dbReference>
<dbReference type="GO" id="GO:0009986">
    <property type="term" value="C:cell surface"/>
    <property type="evidence" value="ECO:0000314"/>
    <property type="project" value="CGD"/>
</dbReference>
<dbReference type="GO" id="GO:0005933">
    <property type="term" value="C:cellular bud"/>
    <property type="evidence" value="ECO:0000314"/>
    <property type="project" value="CGD"/>
</dbReference>
<dbReference type="GO" id="GO:0005576">
    <property type="term" value="C:extracellular region"/>
    <property type="evidence" value="ECO:0000318"/>
    <property type="project" value="GO_Central"/>
</dbReference>
<dbReference type="GO" id="GO:0009277">
    <property type="term" value="C:fungal-type cell wall"/>
    <property type="evidence" value="ECO:0000314"/>
    <property type="project" value="CGD"/>
</dbReference>
<dbReference type="GO" id="GO:0030446">
    <property type="term" value="C:hyphal cell wall"/>
    <property type="evidence" value="ECO:0000314"/>
    <property type="project" value="CGD"/>
</dbReference>
<dbReference type="GO" id="GO:0005886">
    <property type="term" value="C:plasma membrane"/>
    <property type="evidence" value="ECO:0000315"/>
    <property type="project" value="CGD"/>
</dbReference>
<dbReference type="GO" id="GO:0098552">
    <property type="term" value="C:side of membrane"/>
    <property type="evidence" value="ECO:0007669"/>
    <property type="project" value="UniProtKB-KW"/>
</dbReference>
<dbReference type="GO" id="GO:0020037">
    <property type="term" value="F:heme binding"/>
    <property type="evidence" value="ECO:0000318"/>
    <property type="project" value="GO_Central"/>
</dbReference>
<dbReference type="GO" id="GO:0046872">
    <property type="term" value="F:metal ion binding"/>
    <property type="evidence" value="ECO:0007669"/>
    <property type="project" value="UniProtKB-KW"/>
</dbReference>
<dbReference type="GO" id="GO:0006879">
    <property type="term" value="P:intracellular iron ion homeostasis"/>
    <property type="evidence" value="ECO:0000315"/>
    <property type="project" value="CGD"/>
</dbReference>
<dbReference type="GO" id="GO:0044011">
    <property type="term" value="P:single-species biofilm formation on inanimate substrate"/>
    <property type="evidence" value="ECO:0000315"/>
    <property type="project" value="CGD"/>
</dbReference>
<dbReference type="InterPro" id="IPR008427">
    <property type="entry name" value="Extracellular_membr_CFEM_dom"/>
</dbReference>
<dbReference type="InterPro" id="IPR052505">
    <property type="entry name" value="Fungal_Heme-Binding_RBT5"/>
</dbReference>
<dbReference type="PANTHER" id="PTHR35607:SF11">
    <property type="entry name" value="CELL WALL PROTEIN 1"/>
    <property type="match status" value="1"/>
</dbReference>
<dbReference type="PANTHER" id="PTHR35607">
    <property type="entry name" value="GPI-ANCHORED PROTEIN 10"/>
    <property type="match status" value="1"/>
</dbReference>
<dbReference type="Pfam" id="PF05730">
    <property type="entry name" value="CFEM"/>
    <property type="match status" value="4"/>
</dbReference>
<dbReference type="SMART" id="SM00747">
    <property type="entry name" value="CFEM"/>
    <property type="match status" value="4"/>
</dbReference>
<dbReference type="PROSITE" id="PS52012">
    <property type="entry name" value="CFEM"/>
    <property type="match status" value="4"/>
</dbReference>
<feature type="signal peptide" evidence="2">
    <location>
        <begin position="1"/>
        <end position="17"/>
    </location>
</feature>
<feature type="chain" id="PRO_0000424777" description="Cell wall protein 1">
    <location>
        <begin position="18"/>
        <end position="989"/>
    </location>
</feature>
<feature type="propeptide" id="PRO_0000424778" description="Removed in mature form" evidence="2">
    <location>
        <begin position="990"/>
        <end position="1018"/>
    </location>
</feature>
<feature type="domain" description="CFEM 1" evidence="3 20">
    <location>
        <begin position="32"/>
        <end position="143"/>
    </location>
</feature>
<feature type="domain" description="CFEM 2" evidence="3 20">
    <location>
        <begin position="223"/>
        <end position="334"/>
    </location>
</feature>
<feature type="domain" description="CFEM 3" evidence="3 20">
    <location>
        <begin position="393"/>
        <end position="504"/>
    </location>
</feature>
<feature type="domain" description="CFEM 4" evidence="3 20">
    <location>
        <begin position="555"/>
        <end position="666"/>
    </location>
</feature>
<feature type="region of interest" description="Disordered" evidence="4">
    <location>
        <begin position="147"/>
        <end position="227"/>
    </location>
</feature>
<feature type="region of interest" description="Disordered" evidence="4">
    <location>
        <begin position="338"/>
        <end position="396"/>
    </location>
</feature>
<feature type="region of interest" description="Disordered" evidence="4">
    <location>
        <begin position="507"/>
        <end position="557"/>
    </location>
</feature>
<feature type="region of interest" description="Disordered" evidence="4">
    <location>
        <begin position="677"/>
        <end position="785"/>
    </location>
</feature>
<feature type="compositionally biased region" description="Polar residues" evidence="4">
    <location>
        <begin position="148"/>
        <end position="164"/>
    </location>
</feature>
<feature type="compositionally biased region" description="Low complexity" evidence="4">
    <location>
        <begin position="165"/>
        <end position="221"/>
    </location>
</feature>
<feature type="compositionally biased region" description="Low complexity" evidence="4">
    <location>
        <begin position="509"/>
        <end position="553"/>
    </location>
</feature>
<feature type="compositionally biased region" description="Low complexity" evidence="4">
    <location>
        <begin position="690"/>
        <end position="766"/>
    </location>
</feature>
<feature type="compositionally biased region" description="Polar residues" evidence="4">
    <location>
        <begin position="767"/>
        <end position="785"/>
    </location>
</feature>
<feature type="binding site" description="axial binding residue" evidence="3">
    <location>
        <position position="78"/>
    </location>
    <ligand>
        <name>heme</name>
        <dbReference type="ChEBI" id="CHEBI:30413"/>
    </ligand>
    <ligandPart>
        <name>Fe</name>
        <dbReference type="ChEBI" id="CHEBI:18248"/>
    </ligandPart>
</feature>
<feature type="binding site" description="axial binding residue" evidence="3">
    <location>
        <position position="269"/>
    </location>
    <ligand>
        <name>heme</name>
        <dbReference type="ChEBI" id="CHEBI:30413"/>
    </ligand>
    <ligandPart>
        <name>Fe</name>
        <dbReference type="ChEBI" id="CHEBI:18248"/>
    </ligandPart>
</feature>
<feature type="binding site" description="axial binding residue" evidence="3">
    <location>
        <position position="439"/>
    </location>
    <ligand>
        <name>heme</name>
        <dbReference type="ChEBI" id="CHEBI:30413"/>
    </ligand>
    <ligandPart>
        <name>Fe</name>
        <dbReference type="ChEBI" id="CHEBI:18248"/>
    </ligandPart>
</feature>
<feature type="binding site" description="axial binding residue" evidence="3">
    <location>
        <position position="601"/>
    </location>
    <ligand>
        <name>heme</name>
        <dbReference type="ChEBI" id="CHEBI:30413"/>
    </ligand>
    <ligandPart>
        <name>Fe</name>
        <dbReference type="ChEBI" id="CHEBI:18248"/>
    </ligandPart>
</feature>
<feature type="lipid moiety-binding region" description="GPI-anchor amidated serine" evidence="2">
    <location>
        <position position="989"/>
    </location>
</feature>
<feature type="glycosylation site" description="N-linked (GlcNAc...) asparagine" evidence="2">
    <location>
        <position position="698"/>
    </location>
</feature>
<feature type="glycosylation site" description="N-linked (GlcNAc...) asparagine" evidence="2">
    <location>
        <position position="708"/>
    </location>
</feature>
<feature type="glycosylation site" description="N-linked (GlcNAc...) asparagine" evidence="2">
    <location>
        <position position="718"/>
    </location>
</feature>
<feature type="glycosylation site" description="N-linked (GlcNAc...) asparagine" evidence="2">
    <location>
        <position position="729"/>
    </location>
</feature>
<feature type="glycosylation site" description="N-linked (GlcNAc...) asparagine" evidence="2">
    <location>
        <position position="743"/>
    </location>
</feature>
<feature type="glycosylation site" description="N-linked (GlcNAc...) asparagine" evidence="2">
    <location>
        <position position="753"/>
    </location>
</feature>
<feature type="glycosylation site" description="N-linked (GlcNAc...) asparagine" evidence="2">
    <location>
        <position position="769"/>
    </location>
</feature>
<feature type="glycosylation site" description="N-linked (GlcNAc...) asparagine" evidence="2">
    <location>
        <position position="798"/>
    </location>
</feature>
<feature type="glycosylation site" description="N-linked (GlcNAc...) asparagine" evidence="2">
    <location>
        <position position="965"/>
    </location>
</feature>
<feature type="disulfide bond" evidence="3">
    <location>
        <begin position="60"/>
        <end position="100"/>
    </location>
</feature>
<feature type="disulfide bond" evidence="3">
    <location>
        <begin position="64"/>
        <end position="95"/>
    </location>
</feature>
<feature type="disulfide bond" evidence="3">
    <location>
        <begin position="74"/>
        <end position="81"/>
    </location>
</feature>
<feature type="disulfide bond" evidence="3">
    <location>
        <begin position="83"/>
        <end position="116"/>
    </location>
</feature>
<feature type="disulfide bond" evidence="3">
    <location>
        <begin position="251"/>
        <end position="291"/>
    </location>
</feature>
<feature type="disulfide bond" evidence="3">
    <location>
        <begin position="255"/>
        <end position="286"/>
    </location>
</feature>
<feature type="disulfide bond" evidence="3">
    <location>
        <begin position="265"/>
        <end position="272"/>
    </location>
</feature>
<feature type="disulfide bond" evidence="3">
    <location>
        <begin position="274"/>
        <end position="307"/>
    </location>
</feature>
<feature type="disulfide bond" evidence="3">
    <location>
        <begin position="421"/>
        <end position="461"/>
    </location>
</feature>
<feature type="disulfide bond" evidence="3">
    <location>
        <begin position="425"/>
        <end position="456"/>
    </location>
</feature>
<feature type="disulfide bond" evidence="3">
    <location>
        <begin position="435"/>
        <end position="442"/>
    </location>
</feature>
<feature type="disulfide bond" evidence="3">
    <location>
        <begin position="444"/>
        <end position="477"/>
    </location>
</feature>
<feature type="disulfide bond" evidence="3">
    <location>
        <begin position="583"/>
        <end position="623"/>
    </location>
</feature>
<feature type="disulfide bond" evidence="3">
    <location>
        <begin position="587"/>
        <end position="618"/>
    </location>
</feature>
<feature type="disulfide bond" evidence="3">
    <location>
        <begin position="597"/>
        <end position="604"/>
    </location>
</feature>
<feature type="disulfide bond" evidence="3">
    <location>
        <begin position="606"/>
        <end position="639"/>
    </location>
</feature>